<organism>
    <name type="scientific">Brachyspira hyodysenteriae (strain ATCC 49526 / WA1)</name>
    <dbReference type="NCBI Taxonomy" id="565034"/>
    <lineage>
        <taxon>Bacteria</taxon>
        <taxon>Pseudomonadati</taxon>
        <taxon>Spirochaetota</taxon>
        <taxon>Spirochaetia</taxon>
        <taxon>Brachyspirales</taxon>
        <taxon>Brachyspiraceae</taxon>
        <taxon>Brachyspira</taxon>
    </lineage>
</organism>
<protein>
    <recommendedName>
        <fullName evidence="1">Aspartate--tRNA(Asp/Asn) ligase</fullName>
        <ecNumber evidence="1">6.1.1.23</ecNumber>
    </recommendedName>
    <alternativeName>
        <fullName evidence="1">Aspartyl-tRNA synthetase</fullName>
        <shortName evidence="1">AspRS</shortName>
    </alternativeName>
    <alternativeName>
        <fullName evidence="1">Non-discriminating aspartyl-tRNA synthetase</fullName>
        <shortName evidence="1">ND-AspRS</shortName>
    </alternativeName>
</protein>
<name>SYDND_BRAHW</name>
<keyword id="KW-0030">Aminoacyl-tRNA synthetase</keyword>
<keyword id="KW-0067">ATP-binding</keyword>
<keyword id="KW-0963">Cytoplasm</keyword>
<keyword id="KW-0436">Ligase</keyword>
<keyword id="KW-0547">Nucleotide-binding</keyword>
<keyword id="KW-0648">Protein biosynthesis</keyword>
<reference key="1">
    <citation type="journal article" date="2009" name="PLoS ONE">
        <title>Genome sequence of the pathogenic intestinal spirochete Brachyspira hyodysenteriae reveals adaptations to its lifestyle in the porcine large intestine.</title>
        <authorList>
            <person name="Bellgard M.I."/>
            <person name="Wanchanthuek P."/>
            <person name="La T."/>
            <person name="Ryan K."/>
            <person name="Moolhuijzen P."/>
            <person name="Albertyn Z."/>
            <person name="Shaban B."/>
            <person name="Motro Y."/>
            <person name="Dunn D.S."/>
            <person name="Schibeci D."/>
            <person name="Hunter A."/>
            <person name="Barrero R."/>
            <person name="Phillips N.D."/>
            <person name="Hampson D.J."/>
        </authorList>
    </citation>
    <scope>NUCLEOTIDE SEQUENCE [LARGE SCALE GENOMIC DNA]</scope>
    <source>
        <strain>ATCC 49526 / WA1</strain>
    </source>
</reference>
<accession>C0R2C9</accession>
<evidence type="ECO:0000255" key="1">
    <source>
        <dbReference type="HAMAP-Rule" id="MF_00044"/>
    </source>
</evidence>
<comment type="function">
    <text evidence="1">Aspartyl-tRNA synthetase with relaxed tRNA specificity since it is able to aspartylate not only its cognate tRNA(Asp) but also tRNA(Asn). Reaction proceeds in two steps: L-aspartate is first activated by ATP to form Asp-AMP and then transferred to the acceptor end of tRNA(Asp/Asn).</text>
</comment>
<comment type="catalytic activity">
    <reaction evidence="1">
        <text>tRNA(Asx) + L-aspartate + ATP = L-aspartyl-tRNA(Asx) + AMP + diphosphate</text>
        <dbReference type="Rhea" id="RHEA:18349"/>
        <dbReference type="Rhea" id="RHEA-COMP:9710"/>
        <dbReference type="Rhea" id="RHEA-COMP:9711"/>
        <dbReference type="ChEBI" id="CHEBI:29991"/>
        <dbReference type="ChEBI" id="CHEBI:30616"/>
        <dbReference type="ChEBI" id="CHEBI:33019"/>
        <dbReference type="ChEBI" id="CHEBI:78442"/>
        <dbReference type="ChEBI" id="CHEBI:78516"/>
        <dbReference type="ChEBI" id="CHEBI:456215"/>
        <dbReference type="EC" id="6.1.1.23"/>
    </reaction>
</comment>
<comment type="subunit">
    <text evidence="1">Homodimer.</text>
</comment>
<comment type="subcellular location">
    <subcellularLocation>
        <location evidence="1">Cytoplasm</location>
    </subcellularLocation>
</comment>
<comment type="similarity">
    <text evidence="1">Belongs to the class-II aminoacyl-tRNA synthetase family. Type 1 subfamily.</text>
</comment>
<gene>
    <name evidence="1" type="primary">aspS</name>
    <name type="ordered locus">BHWA1_01803</name>
</gene>
<sequence>MRFKSAYNGILTKDDIGKEVKLAGWVLRRRDHGGVIFVDLRDRTGFVQIVFNPEISKEAHNDAQDLRSEYVISVEGKIRARSPEMINPKIPTGEIEVMVEKMELLNTSETPPFLLEDDIDTGEDIRLKYRYLDLRRPTVFNNLYKRFQITNAFRKHLSDNGFIDVETPILNKSTPEGARDFLVPSRLNAGDFYALPQSPQIFKQILMIGGFDRYYQIAKCFRDEDLRADRQPEFTQVDIETSFLNTDEFLSIMENVTANIVKDVYGIDLPTPFPRLNYYDAMEMYGSDKPDTRFELKLINVEDAVRGCDFAVFKNALDNKFIIRCLNAKGGEKLSRKDIDDFTKYVGIFGAKGLAWMRVTDKGLESNIVKFFSEENQKKILEVTKAEKGDLLFFVADTPKVTFDALGNLRLRVAEKLNLIDKDKLNFLWVVEFPLFEYDHKEKRISATHHPFTAPVPEDVAILESEPLKVRSDTYDLVLNGNEIGGGGQRIYDSKVQAIIFKLLGIDEEKAKLRFGFLLDALKYGAPPMCGMAYGIDRVVMLLQKQDSIREVIAFPKTQKGQCLMSGCPSTVDADQLEELHLSIEE</sequence>
<dbReference type="EC" id="6.1.1.23" evidence="1"/>
<dbReference type="EMBL" id="CP001357">
    <property type="protein sequence ID" value="ACN84267.1"/>
    <property type="molecule type" value="Genomic_DNA"/>
</dbReference>
<dbReference type="RefSeq" id="WP_012671307.1">
    <property type="nucleotide sequence ID" value="NC_012225.1"/>
</dbReference>
<dbReference type="SMR" id="C0R2C9"/>
<dbReference type="STRING" id="565034.BHWA1_01803"/>
<dbReference type="KEGG" id="bhy:BHWA1_01803"/>
<dbReference type="eggNOG" id="COG0173">
    <property type="taxonomic scope" value="Bacteria"/>
</dbReference>
<dbReference type="HOGENOM" id="CLU_014330_3_2_12"/>
<dbReference type="Proteomes" id="UP000001803">
    <property type="component" value="Chromosome"/>
</dbReference>
<dbReference type="GO" id="GO:0005737">
    <property type="term" value="C:cytoplasm"/>
    <property type="evidence" value="ECO:0007669"/>
    <property type="project" value="UniProtKB-SubCell"/>
</dbReference>
<dbReference type="GO" id="GO:0004815">
    <property type="term" value="F:aspartate-tRNA ligase activity"/>
    <property type="evidence" value="ECO:0007669"/>
    <property type="project" value="UniProtKB-UniRule"/>
</dbReference>
<dbReference type="GO" id="GO:0050560">
    <property type="term" value="F:aspartate-tRNA(Asn) ligase activity"/>
    <property type="evidence" value="ECO:0007669"/>
    <property type="project" value="UniProtKB-EC"/>
</dbReference>
<dbReference type="GO" id="GO:0005524">
    <property type="term" value="F:ATP binding"/>
    <property type="evidence" value="ECO:0007669"/>
    <property type="project" value="UniProtKB-UniRule"/>
</dbReference>
<dbReference type="GO" id="GO:0003676">
    <property type="term" value="F:nucleic acid binding"/>
    <property type="evidence" value="ECO:0007669"/>
    <property type="project" value="InterPro"/>
</dbReference>
<dbReference type="GO" id="GO:0006422">
    <property type="term" value="P:aspartyl-tRNA aminoacylation"/>
    <property type="evidence" value="ECO:0007669"/>
    <property type="project" value="UniProtKB-UniRule"/>
</dbReference>
<dbReference type="CDD" id="cd00777">
    <property type="entry name" value="AspRS_core"/>
    <property type="match status" value="1"/>
</dbReference>
<dbReference type="CDD" id="cd04317">
    <property type="entry name" value="EcAspRS_like_N"/>
    <property type="match status" value="1"/>
</dbReference>
<dbReference type="Gene3D" id="3.30.930.10">
    <property type="entry name" value="Bira Bifunctional Protein, Domain 2"/>
    <property type="match status" value="1"/>
</dbReference>
<dbReference type="Gene3D" id="3.30.1360.30">
    <property type="entry name" value="GAD-like domain"/>
    <property type="match status" value="1"/>
</dbReference>
<dbReference type="Gene3D" id="2.40.50.140">
    <property type="entry name" value="Nucleic acid-binding proteins"/>
    <property type="match status" value="1"/>
</dbReference>
<dbReference type="HAMAP" id="MF_00044">
    <property type="entry name" value="Asp_tRNA_synth_type1"/>
    <property type="match status" value="1"/>
</dbReference>
<dbReference type="InterPro" id="IPR004364">
    <property type="entry name" value="Aa-tRNA-synt_II"/>
</dbReference>
<dbReference type="InterPro" id="IPR006195">
    <property type="entry name" value="aa-tRNA-synth_II"/>
</dbReference>
<dbReference type="InterPro" id="IPR045864">
    <property type="entry name" value="aa-tRNA-synth_II/BPL/LPL"/>
</dbReference>
<dbReference type="InterPro" id="IPR004524">
    <property type="entry name" value="Asp-tRNA-ligase_1"/>
</dbReference>
<dbReference type="InterPro" id="IPR047089">
    <property type="entry name" value="Asp-tRNA-ligase_1_N"/>
</dbReference>
<dbReference type="InterPro" id="IPR002312">
    <property type="entry name" value="Asp/Asn-tRNA-synth_IIb"/>
</dbReference>
<dbReference type="InterPro" id="IPR047090">
    <property type="entry name" value="AspRS_core"/>
</dbReference>
<dbReference type="InterPro" id="IPR004115">
    <property type="entry name" value="GAD-like_sf"/>
</dbReference>
<dbReference type="InterPro" id="IPR029351">
    <property type="entry name" value="GAD_dom"/>
</dbReference>
<dbReference type="InterPro" id="IPR012340">
    <property type="entry name" value="NA-bd_OB-fold"/>
</dbReference>
<dbReference type="InterPro" id="IPR004365">
    <property type="entry name" value="NA-bd_OB_tRNA"/>
</dbReference>
<dbReference type="NCBIfam" id="TIGR00459">
    <property type="entry name" value="aspS_bact"/>
    <property type="match status" value="1"/>
</dbReference>
<dbReference type="NCBIfam" id="NF001750">
    <property type="entry name" value="PRK00476.1"/>
    <property type="match status" value="1"/>
</dbReference>
<dbReference type="PANTHER" id="PTHR22594:SF5">
    <property type="entry name" value="ASPARTATE--TRNA LIGASE, MITOCHONDRIAL"/>
    <property type="match status" value="1"/>
</dbReference>
<dbReference type="PANTHER" id="PTHR22594">
    <property type="entry name" value="ASPARTYL/LYSYL-TRNA SYNTHETASE"/>
    <property type="match status" value="1"/>
</dbReference>
<dbReference type="Pfam" id="PF02938">
    <property type="entry name" value="GAD"/>
    <property type="match status" value="1"/>
</dbReference>
<dbReference type="Pfam" id="PF00152">
    <property type="entry name" value="tRNA-synt_2"/>
    <property type="match status" value="1"/>
</dbReference>
<dbReference type="Pfam" id="PF01336">
    <property type="entry name" value="tRNA_anti-codon"/>
    <property type="match status" value="1"/>
</dbReference>
<dbReference type="PRINTS" id="PR01042">
    <property type="entry name" value="TRNASYNTHASP"/>
</dbReference>
<dbReference type="SUPFAM" id="SSF55681">
    <property type="entry name" value="Class II aaRS and biotin synthetases"/>
    <property type="match status" value="1"/>
</dbReference>
<dbReference type="SUPFAM" id="SSF55261">
    <property type="entry name" value="GAD domain-like"/>
    <property type="match status" value="1"/>
</dbReference>
<dbReference type="SUPFAM" id="SSF50249">
    <property type="entry name" value="Nucleic acid-binding proteins"/>
    <property type="match status" value="1"/>
</dbReference>
<dbReference type="PROSITE" id="PS50862">
    <property type="entry name" value="AA_TRNA_LIGASE_II"/>
    <property type="match status" value="1"/>
</dbReference>
<proteinExistence type="inferred from homology"/>
<feature type="chain" id="PRO_1000198965" description="Aspartate--tRNA(Asp/Asn) ligase">
    <location>
        <begin position="1"/>
        <end position="586"/>
    </location>
</feature>
<feature type="region of interest" description="Aspartate" evidence="1">
    <location>
        <begin position="200"/>
        <end position="203"/>
    </location>
</feature>
<feature type="binding site" evidence="1">
    <location>
        <position position="176"/>
    </location>
    <ligand>
        <name>L-aspartate</name>
        <dbReference type="ChEBI" id="CHEBI:29991"/>
    </ligand>
</feature>
<feature type="binding site" evidence="1">
    <location>
        <begin position="222"/>
        <end position="224"/>
    </location>
    <ligand>
        <name>ATP</name>
        <dbReference type="ChEBI" id="CHEBI:30616"/>
    </ligand>
</feature>
<feature type="binding site" evidence="1">
    <location>
        <position position="222"/>
    </location>
    <ligand>
        <name>L-aspartate</name>
        <dbReference type="ChEBI" id="CHEBI:29991"/>
    </ligand>
</feature>
<feature type="binding site" evidence="1">
    <location>
        <position position="231"/>
    </location>
    <ligand>
        <name>ATP</name>
        <dbReference type="ChEBI" id="CHEBI:30616"/>
    </ligand>
</feature>
<feature type="binding site" evidence="1">
    <location>
        <position position="449"/>
    </location>
    <ligand>
        <name>L-aspartate</name>
        <dbReference type="ChEBI" id="CHEBI:29991"/>
    </ligand>
</feature>
<feature type="binding site" evidence="1">
    <location>
        <position position="483"/>
    </location>
    <ligand>
        <name>ATP</name>
        <dbReference type="ChEBI" id="CHEBI:30616"/>
    </ligand>
</feature>
<feature type="binding site" evidence="1">
    <location>
        <position position="490"/>
    </location>
    <ligand>
        <name>L-aspartate</name>
        <dbReference type="ChEBI" id="CHEBI:29991"/>
    </ligand>
</feature>
<feature type="binding site" evidence="1">
    <location>
        <begin position="535"/>
        <end position="538"/>
    </location>
    <ligand>
        <name>ATP</name>
        <dbReference type="ChEBI" id="CHEBI:30616"/>
    </ligand>
</feature>
<feature type="site" description="Important for tRNA non-discrimination" evidence="1">
    <location>
        <position position="32"/>
    </location>
</feature>